<dbReference type="EC" id="2.1.1.45"/>
<dbReference type="EMBL" id="CU329670">
    <property type="protein sequence ID" value="CAB52423.1"/>
    <property type="molecule type" value="Genomic_DNA"/>
</dbReference>
<dbReference type="PIR" id="T37719">
    <property type="entry name" value="T37719"/>
</dbReference>
<dbReference type="SMR" id="Q9UTI7"/>
<dbReference type="BioGRID" id="279249">
    <property type="interactions" value="10"/>
</dbReference>
<dbReference type="FunCoup" id="Q9UTI7">
    <property type="interactions" value="160"/>
</dbReference>
<dbReference type="STRING" id="284812.Q9UTI7"/>
<dbReference type="MoonProt" id="Q9UTI7"/>
<dbReference type="iPTMnet" id="Q9UTI7"/>
<dbReference type="PaxDb" id="4896-SPAC15E1.04.1"/>
<dbReference type="EnsemblFungi" id="SPAC15E1.04.1">
    <property type="protein sequence ID" value="SPAC15E1.04.1:pep"/>
    <property type="gene ID" value="SPAC15E1.04"/>
</dbReference>
<dbReference type="KEGG" id="spo:2542801"/>
<dbReference type="PomBase" id="SPAC15E1.04"/>
<dbReference type="VEuPathDB" id="FungiDB:SPAC15E1.04"/>
<dbReference type="eggNOG" id="KOG0672">
    <property type="taxonomic scope" value="Eukaryota"/>
</dbReference>
<dbReference type="eggNOG" id="KOG0673">
    <property type="taxonomic scope" value="Eukaryota"/>
</dbReference>
<dbReference type="HOGENOM" id="CLU_028985_0_0_1"/>
<dbReference type="InParanoid" id="Q9UTI7"/>
<dbReference type="OMA" id="PLAIPEM"/>
<dbReference type="PhylomeDB" id="Q9UTI7"/>
<dbReference type="Reactome" id="R-SPO-499943">
    <property type="pathway name" value="Interconversion of nucleotide di- and triphosphates"/>
</dbReference>
<dbReference type="UniPathway" id="UPA00575"/>
<dbReference type="PRO" id="PR:Q9UTI7"/>
<dbReference type="Proteomes" id="UP000002485">
    <property type="component" value="Chromosome I"/>
</dbReference>
<dbReference type="GO" id="GO:0005829">
    <property type="term" value="C:cytosol"/>
    <property type="evidence" value="ECO:0007005"/>
    <property type="project" value="PomBase"/>
</dbReference>
<dbReference type="GO" id="GO:0005739">
    <property type="term" value="C:mitochondrion"/>
    <property type="evidence" value="ECO:0000318"/>
    <property type="project" value="GO_Central"/>
</dbReference>
<dbReference type="GO" id="GO:0010181">
    <property type="term" value="F:FMN binding"/>
    <property type="evidence" value="ECO:0000314"/>
    <property type="project" value="PomBase"/>
</dbReference>
<dbReference type="GO" id="GO:0004633">
    <property type="term" value="F:phosphopantothenoylcysteine decarboxylase activity"/>
    <property type="evidence" value="ECO:0000314"/>
    <property type="project" value="PomBase"/>
</dbReference>
<dbReference type="GO" id="GO:0004864">
    <property type="term" value="F:protein phosphatase inhibitor activity"/>
    <property type="evidence" value="ECO:0000314"/>
    <property type="project" value="PomBase"/>
</dbReference>
<dbReference type="GO" id="GO:0004799">
    <property type="term" value="F:thymidylate synthase activity"/>
    <property type="evidence" value="ECO:0000316"/>
    <property type="project" value="PomBase"/>
</dbReference>
<dbReference type="GO" id="GO:0015937">
    <property type="term" value="P:coenzyme A biosynthetic process"/>
    <property type="evidence" value="ECO:0000305"/>
    <property type="project" value="PomBase"/>
</dbReference>
<dbReference type="GO" id="GO:0006231">
    <property type="term" value="P:dTMP biosynthetic process"/>
    <property type="evidence" value="ECO:0000316"/>
    <property type="project" value="PomBase"/>
</dbReference>
<dbReference type="GO" id="GO:0006235">
    <property type="term" value="P:dTTP biosynthetic process"/>
    <property type="evidence" value="ECO:0007669"/>
    <property type="project" value="UniProtKB-UniPathway"/>
</dbReference>
<dbReference type="GO" id="GO:0032259">
    <property type="term" value="P:methylation"/>
    <property type="evidence" value="ECO:0007669"/>
    <property type="project" value="UniProtKB-KW"/>
</dbReference>
<dbReference type="CDD" id="cd00351">
    <property type="entry name" value="TS_Pyrimidine_HMase"/>
    <property type="match status" value="1"/>
</dbReference>
<dbReference type="FunFam" id="3.40.50.1950:FF:000004">
    <property type="entry name" value="Phosphopantothenoylcysteine decarboxylase"/>
    <property type="match status" value="1"/>
</dbReference>
<dbReference type="FunFam" id="3.30.572.10:FF:000013">
    <property type="entry name" value="Thymidylate synthase"/>
    <property type="match status" value="1"/>
</dbReference>
<dbReference type="Gene3D" id="3.40.50.1950">
    <property type="entry name" value="Flavin prenyltransferase-like"/>
    <property type="match status" value="1"/>
</dbReference>
<dbReference type="Gene3D" id="3.30.572.10">
    <property type="entry name" value="Thymidylate synthase/dCMP hydroxymethylase domain"/>
    <property type="match status" value="1"/>
</dbReference>
<dbReference type="HAMAP" id="MF_00008">
    <property type="entry name" value="Thymidy_synth_bact"/>
    <property type="match status" value="1"/>
</dbReference>
<dbReference type="InterPro" id="IPR036551">
    <property type="entry name" value="Flavin_trans-like"/>
</dbReference>
<dbReference type="InterPro" id="IPR003382">
    <property type="entry name" value="Flavoprotein"/>
</dbReference>
<dbReference type="InterPro" id="IPR045097">
    <property type="entry name" value="Thymidate_synth/dCMP_Mease"/>
</dbReference>
<dbReference type="InterPro" id="IPR023451">
    <property type="entry name" value="Thymidate_synth/dCMP_Mease_dom"/>
</dbReference>
<dbReference type="InterPro" id="IPR036926">
    <property type="entry name" value="Thymidate_synth/dCMP_Mease_sf"/>
</dbReference>
<dbReference type="InterPro" id="IPR000398">
    <property type="entry name" value="Thymidylate_synthase"/>
</dbReference>
<dbReference type="InterPro" id="IPR020940">
    <property type="entry name" value="Thymidylate_synthase_AS"/>
</dbReference>
<dbReference type="NCBIfam" id="TIGR03284">
    <property type="entry name" value="thym_sym"/>
    <property type="match status" value="1"/>
</dbReference>
<dbReference type="PANTHER" id="PTHR11548:SF2">
    <property type="entry name" value="THYMIDYLATE SYNTHASE"/>
    <property type="match status" value="1"/>
</dbReference>
<dbReference type="PANTHER" id="PTHR11548">
    <property type="entry name" value="THYMIDYLATE SYNTHASE 1"/>
    <property type="match status" value="1"/>
</dbReference>
<dbReference type="Pfam" id="PF02441">
    <property type="entry name" value="Flavoprotein"/>
    <property type="match status" value="1"/>
</dbReference>
<dbReference type="Pfam" id="PF00303">
    <property type="entry name" value="Thymidylat_synt"/>
    <property type="match status" value="1"/>
</dbReference>
<dbReference type="PRINTS" id="PR00108">
    <property type="entry name" value="THYMDSNTHASE"/>
</dbReference>
<dbReference type="SUPFAM" id="SSF52507">
    <property type="entry name" value="Homo-oligomeric flavin-containing Cys decarboxylases, HFCD"/>
    <property type="match status" value="1"/>
</dbReference>
<dbReference type="SUPFAM" id="SSF55831">
    <property type="entry name" value="Thymidylate synthase/dCMP hydroxymethylase"/>
    <property type="match status" value="1"/>
</dbReference>
<dbReference type="PROSITE" id="PS00091">
    <property type="entry name" value="THYMIDYLATE_SYNTHASE"/>
    <property type="match status" value="1"/>
</dbReference>
<name>TYSY_SCHPO</name>
<evidence type="ECO:0000250" key="1">
    <source>
        <dbReference type="UniProtKB" id="P06785"/>
    </source>
</evidence>
<evidence type="ECO:0000250" key="2">
    <source>
        <dbReference type="UniProtKB" id="P0A884"/>
    </source>
</evidence>
<evidence type="ECO:0000255" key="3"/>
<evidence type="ECO:0000256" key="4">
    <source>
        <dbReference type="SAM" id="MobiDB-lite"/>
    </source>
</evidence>
<evidence type="ECO:0000269" key="5">
    <source>
    </source>
</evidence>
<evidence type="ECO:0000305" key="6"/>
<evidence type="ECO:0000312" key="7">
    <source>
        <dbReference type="EMBL" id="CAB52423.1"/>
    </source>
</evidence>
<protein>
    <recommendedName>
        <fullName>Probable thymidylate synthase</fullName>
        <shortName>TS</shortName>
        <shortName>TSase</shortName>
        <ecNumber>2.1.1.45</ecNumber>
    </recommendedName>
</protein>
<keyword id="KW-0963">Cytoplasm</keyword>
<keyword id="KW-0489">Methyltransferase</keyword>
<keyword id="KW-0545">Nucleotide biosynthesis</keyword>
<keyword id="KW-1185">Reference proteome</keyword>
<keyword id="KW-0808">Transferase</keyword>
<organism>
    <name type="scientific">Schizosaccharomyces pombe (strain 972 / ATCC 24843)</name>
    <name type="common">Fission yeast</name>
    <dbReference type="NCBI Taxonomy" id="284812"/>
    <lineage>
        <taxon>Eukaryota</taxon>
        <taxon>Fungi</taxon>
        <taxon>Dikarya</taxon>
        <taxon>Ascomycota</taxon>
        <taxon>Taphrinomycotina</taxon>
        <taxon>Schizosaccharomycetes</taxon>
        <taxon>Schizosaccharomycetales</taxon>
        <taxon>Schizosaccharomycetaceae</taxon>
        <taxon>Schizosaccharomyces</taxon>
    </lineage>
</organism>
<comment type="function">
    <text evidence="1">Required for both nuclear and mitochondrial DNA synthesis.</text>
</comment>
<comment type="catalytic activity">
    <reaction evidence="1">
        <text>dUMP + (6R)-5,10-methylene-5,6,7,8-tetrahydrofolate = 7,8-dihydrofolate + dTMP</text>
        <dbReference type="Rhea" id="RHEA:12104"/>
        <dbReference type="ChEBI" id="CHEBI:15636"/>
        <dbReference type="ChEBI" id="CHEBI:57451"/>
        <dbReference type="ChEBI" id="CHEBI:63528"/>
        <dbReference type="ChEBI" id="CHEBI:246422"/>
        <dbReference type="EC" id="2.1.1.45"/>
    </reaction>
</comment>
<comment type="pathway">
    <text>Pyrimidine metabolism; dTTP biosynthesis.</text>
</comment>
<comment type="subcellular location">
    <subcellularLocation>
        <location evidence="5">Cytoplasm</location>
    </subcellularLocation>
</comment>
<comment type="similarity">
    <text evidence="3">In the N-terminal section; belongs to the HFCD (homo-oligomeric flavin containing Cys decarboxylase) superfamily.</text>
</comment>
<comment type="similarity">
    <text evidence="3">In the C-terminal section; belongs to the thymidylate synthase family.</text>
</comment>
<proteinExistence type="inferred from homology"/>
<feature type="chain" id="PRO_0000310825" description="Probable thymidylate synthase">
    <location>
        <begin position="1"/>
        <end position="625"/>
    </location>
</feature>
<feature type="region of interest" description="Disordered" evidence="4">
    <location>
        <begin position="224"/>
        <end position="323"/>
    </location>
</feature>
<feature type="compositionally biased region" description="Acidic residues" evidence="4">
    <location>
        <begin position="243"/>
        <end position="257"/>
    </location>
</feature>
<feature type="compositionally biased region" description="Polar residues" evidence="4">
    <location>
        <begin position="258"/>
        <end position="269"/>
    </location>
</feature>
<feature type="compositionally biased region" description="Polar residues" evidence="4">
    <location>
        <begin position="293"/>
        <end position="312"/>
    </location>
</feature>
<feature type="active site" description="Nucleophile" evidence="2">
    <location>
        <position position="497"/>
    </location>
</feature>
<feature type="binding site" description="in other chain" evidence="2">
    <location>
        <position position="350"/>
    </location>
    <ligand>
        <name>dUMP</name>
        <dbReference type="ChEBI" id="CHEBI:246422"/>
        <note>ligand shared between dimeric partners</note>
    </ligand>
</feature>
<feature type="binding site" evidence="2">
    <location>
        <begin position="477"/>
        <end position="478"/>
    </location>
    <ligand>
        <name>dUMP</name>
        <dbReference type="ChEBI" id="CHEBI:246422"/>
        <note>ligand shared between dimeric partners</note>
    </ligand>
</feature>
<feature type="binding site" description="in other chain" evidence="2">
    <location>
        <begin position="524"/>
        <end position="527"/>
    </location>
    <ligand>
        <name>dUMP</name>
        <dbReference type="ChEBI" id="CHEBI:246422"/>
        <note>ligand shared between dimeric partners</note>
    </ligand>
</feature>
<feature type="binding site" evidence="2">
    <location>
        <position position="527"/>
    </location>
    <ligand>
        <name>(6R)-5,10-methylene-5,6,7,8-tetrahydrofolate</name>
        <dbReference type="ChEBI" id="CHEBI:15636"/>
    </ligand>
</feature>
<feature type="binding site" description="in other chain" evidence="2">
    <location>
        <position position="535"/>
    </location>
    <ligand>
        <name>dUMP</name>
        <dbReference type="ChEBI" id="CHEBI:246422"/>
        <note>ligand shared between dimeric partners</note>
    </ligand>
</feature>
<feature type="binding site" description="in other chain" evidence="2">
    <location>
        <begin position="565"/>
        <end position="567"/>
    </location>
    <ligand>
        <name>dUMP</name>
        <dbReference type="ChEBI" id="CHEBI:246422"/>
        <note>ligand shared between dimeric partners</note>
    </ligand>
</feature>
<accession>Q9UTI7</accession>
<reference evidence="7" key="1">
    <citation type="journal article" date="2002" name="Nature">
        <title>The genome sequence of Schizosaccharomyces pombe.</title>
        <authorList>
            <person name="Wood V."/>
            <person name="Gwilliam R."/>
            <person name="Rajandream M.A."/>
            <person name="Lyne M.H."/>
            <person name="Lyne R."/>
            <person name="Stewart A."/>
            <person name="Sgouros J.G."/>
            <person name="Peat N."/>
            <person name="Hayles J."/>
            <person name="Baker S.G."/>
            <person name="Basham D."/>
            <person name="Bowman S."/>
            <person name="Brooks K."/>
            <person name="Brown D."/>
            <person name="Brown S."/>
            <person name="Chillingworth T."/>
            <person name="Churcher C.M."/>
            <person name="Collins M."/>
            <person name="Connor R."/>
            <person name="Cronin A."/>
            <person name="Davis P."/>
            <person name="Feltwell T."/>
            <person name="Fraser A."/>
            <person name="Gentles S."/>
            <person name="Goble A."/>
            <person name="Hamlin N."/>
            <person name="Harris D.E."/>
            <person name="Hidalgo J."/>
            <person name="Hodgson G."/>
            <person name="Holroyd S."/>
            <person name="Hornsby T."/>
            <person name="Howarth S."/>
            <person name="Huckle E.J."/>
            <person name="Hunt S."/>
            <person name="Jagels K."/>
            <person name="James K.D."/>
            <person name="Jones L."/>
            <person name="Jones M."/>
            <person name="Leather S."/>
            <person name="McDonald S."/>
            <person name="McLean J."/>
            <person name="Mooney P."/>
            <person name="Moule S."/>
            <person name="Mungall K.L."/>
            <person name="Murphy L.D."/>
            <person name="Niblett D."/>
            <person name="Odell C."/>
            <person name="Oliver K."/>
            <person name="O'Neil S."/>
            <person name="Pearson D."/>
            <person name="Quail M.A."/>
            <person name="Rabbinowitsch E."/>
            <person name="Rutherford K.M."/>
            <person name="Rutter S."/>
            <person name="Saunders D."/>
            <person name="Seeger K."/>
            <person name="Sharp S."/>
            <person name="Skelton J."/>
            <person name="Simmonds M.N."/>
            <person name="Squares R."/>
            <person name="Squares S."/>
            <person name="Stevens K."/>
            <person name="Taylor K."/>
            <person name="Taylor R.G."/>
            <person name="Tivey A."/>
            <person name="Walsh S.V."/>
            <person name="Warren T."/>
            <person name="Whitehead S."/>
            <person name="Woodward J.R."/>
            <person name="Volckaert G."/>
            <person name="Aert R."/>
            <person name="Robben J."/>
            <person name="Grymonprez B."/>
            <person name="Weltjens I."/>
            <person name="Vanstreels E."/>
            <person name="Rieger M."/>
            <person name="Schaefer M."/>
            <person name="Mueller-Auer S."/>
            <person name="Gabel C."/>
            <person name="Fuchs M."/>
            <person name="Duesterhoeft A."/>
            <person name="Fritzc C."/>
            <person name="Holzer E."/>
            <person name="Moestl D."/>
            <person name="Hilbert H."/>
            <person name="Borzym K."/>
            <person name="Langer I."/>
            <person name="Beck A."/>
            <person name="Lehrach H."/>
            <person name="Reinhardt R."/>
            <person name="Pohl T.M."/>
            <person name="Eger P."/>
            <person name="Zimmermann W."/>
            <person name="Wedler H."/>
            <person name="Wambutt R."/>
            <person name="Purnelle B."/>
            <person name="Goffeau A."/>
            <person name="Cadieu E."/>
            <person name="Dreano S."/>
            <person name="Gloux S."/>
            <person name="Lelaure V."/>
            <person name="Mottier S."/>
            <person name="Galibert F."/>
            <person name="Aves S.J."/>
            <person name="Xiang Z."/>
            <person name="Hunt C."/>
            <person name="Moore K."/>
            <person name="Hurst S.M."/>
            <person name="Lucas M."/>
            <person name="Rochet M."/>
            <person name="Gaillardin C."/>
            <person name="Tallada V.A."/>
            <person name="Garzon A."/>
            <person name="Thode G."/>
            <person name="Daga R.R."/>
            <person name="Cruzado L."/>
            <person name="Jimenez J."/>
            <person name="Sanchez M."/>
            <person name="del Rey F."/>
            <person name="Benito J."/>
            <person name="Dominguez A."/>
            <person name="Revuelta J.L."/>
            <person name="Moreno S."/>
            <person name="Armstrong J."/>
            <person name="Forsburg S.L."/>
            <person name="Cerutti L."/>
            <person name="Lowe T."/>
            <person name="McCombie W.R."/>
            <person name="Paulsen I."/>
            <person name="Potashkin J."/>
            <person name="Shpakovski G.V."/>
            <person name="Ussery D."/>
            <person name="Barrell B.G."/>
            <person name="Nurse P."/>
        </authorList>
    </citation>
    <scope>NUCLEOTIDE SEQUENCE [LARGE SCALE GENOMIC DNA]</scope>
    <source>
        <strain>972 / ATCC 24843</strain>
    </source>
</reference>
<reference evidence="6" key="2">
    <citation type="journal article" date="2006" name="Nat. Biotechnol.">
        <title>ORFeome cloning and global analysis of protein localization in the fission yeast Schizosaccharomyces pombe.</title>
        <authorList>
            <person name="Matsuyama A."/>
            <person name="Arai R."/>
            <person name="Yashiroda Y."/>
            <person name="Shirai A."/>
            <person name="Kamata A."/>
            <person name="Sekido S."/>
            <person name="Kobayashi Y."/>
            <person name="Hashimoto A."/>
            <person name="Hamamoto M."/>
            <person name="Hiraoka Y."/>
            <person name="Horinouchi S."/>
            <person name="Yoshida M."/>
        </authorList>
    </citation>
    <scope>SUBCELLULAR LOCATION [LARGE SCALE ANALYSIS]</scope>
</reference>
<sequence>MSQPLHARFATRAVKNPMILEKERQLTDSKYHILVAATGSVAAIKLTLIVKSLLTYKGVDVQVVLTDPARNFVEKEDLTALGVNVYNNADDWKNWDGLECPITHIELRRWAHLLLIAPLSANTMAKMANGLCDNLLTSLIRAWAPLKPILLAPAMNTLMWTNPITQEHLSAISRIYKNSEFIMPIEKVLACGDIGMGGMAEWRNIVGRVADKLQLEQKSVLPNAVKNIDGQDDDSSEQTAAFEEYDDDDDDDVDDNEQSNSMIETSANADITPKASLLPSTTESSISKDHETSQAPLGSESVDTQASENVTTKPEPPVPFTSSEYRNTEEEQYLNLIRYILENGQSRPDRTGTGTRSVFAPPQLRFSLRNNTLPLLTTKRVFLRGVLEELLWFIHGDTNANHLSEKGIHIWDGNGSREFLDSRGLTDRKVGDLGPIYGFQWRHFGAQYVDCDTDYTNKGVDQLAQVISTLKLNPYDRRIILSAWNPLAIPEMALPPCHIFCQFYVSEPCKPGGKPQLSSMMYQRSADMGLGVPFNIASYSLLTHMIAHMCGYEAAEFVHVMGDCHIYNDHLEALQTQLERVPKAFPKLFFKRDAKDIGSIDSFSVDDFAVEGYNPYGPIKMKMSV</sequence>
<gene>
    <name type="ORF">SPAC15E1.04</name>
</gene>